<reference key="1">
    <citation type="submission" date="2007-08" db="EMBL/GenBank/DDBJ databases">
        <authorList>
            <consortium name="The Citrobacter koseri Genome Sequencing Project"/>
            <person name="McClelland M."/>
            <person name="Sanderson E.K."/>
            <person name="Porwollik S."/>
            <person name="Spieth J."/>
            <person name="Clifton W.S."/>
            <person name="Latreille P."/>
            <person name="Courtney L."/>
            <person name="Wang C."/>
            <person name="Pepin K."/>
            <person name="Bhonagiri V."/>
            <person name="Nash W."/>
            <person name="Johnson M."/>
            <person name="Thiruvilangam P."/>
            <person name="Wilson R."/>
        </authorList>
    </citation>
    <scope>NUCLEOTIDE SEQUENCE [LARGE SCALE GENOMIC DNA]</scope>
    <source>
        <strain>ATCC BAA-895 / CDC 4225-83 / SGSC4696</strain>
    </source>
</reference>
<keyword id="KW-0021">Allosteric enzyme</keyword>
<keyword id="KW-0067">ATP-binding</keyword>
<keyword id="KW-0963">Cytoplasm</keyword>
<keyword id="KW-0324">Glycolysis</keyword>
<keyword id="KW-0418">Kinase</keyword>
<keyword id="KW-0460">Magnesium</keyword>
<keyword id="KW-0479">Metal-binding</keyword>
<keyword id="KW-0547">Nucleotide-binding</keyword>
<keyword id="KW-1185">Reference proteome</keyword>
<keyword id="KW-0808">Transferase</keyword>
<name>PFKA_CITK8</name>
<protein>
    <recommendedName>
        <fullName evidence="1">ATP-dependent 6-phosphofructokinase</fullName>
        <shortName evidence="1">ATP-PFK</shortName>
        <shortName evidence="1">Phosphofructokinase</shortName>
        <ecNumber evidence="1">2.7.1.11</ecNumber>
    </recommendedName>
    <alternativeName>
        <fullName evidence="1">Phosphohexokinase</fullName>
    </alternativeName>
</protein>
<proteinExistence type="inferred from homology"/>
<feature type="chain" id="PRO_1000059750" description="ATP-dependent 6-phosphofructokinase">
    <location>
        <begin position="1"/>
        <end position="320"/>
    </location>
</feature>
<feature type="active site" description="Proton acceptor" evidence="1">
    <location>
        <position position="128"/>
    </location>
</feature>
<feature type="binding site" evidence="1">
    <location>
        <position position="12"/>
    </location>
    <ligand>
        <name>ATP</name>
        <dbReference type="ChEBI" id="CHEBI:30616"/>
    </ligand>
</feature>
<feature type="binding site" evidence="1">
    <location>
        <begin position="22"/>
        <end position="26"/>
    </location>
    <ligand>
        <name>ADP</name>
        <dbReference type="ChEBI" id="CHEBI:456216"/>
        <note>allosteric activator; ligand shared between dimeric partners</note>
    </ligand>
</feature>
<feature type="binding site" evidence="1">
    <location>
        <begin position="55"/>
        <end position="60"/>
    </location>
    <ligand>
        <name>ADP</name>
        <dbReference type="ChEBI" id="CHEBI:456216"/>
        <note>allosteric activator; ligand shared between dimeric partners</note>
    </ligand>
</feature>
<feature type="binding site" evidence="1">
    <location>
        <begin position="73"/>
        <end position="74"/>
    </location>
    <ligand>
        <name>ATP</name>
        <dbReference type="ChEBI" id="CHEBI:30616"/>
    </ligand>
</feature>
<feature type="binding site" evidence="1">
    <location>
        <begin position="103"/>
        <end position="106"/>
    </location>
    <ligand>
        <name>ATP</name>
        <dbReference type="ChEBI" id="CHEBI:30616"/>
    </ligand>
</feature>
<feature type="binding site" evidence="1">
    <location>
        <position position="104"/>
    </location>
    <ligand>
        <name>Mg(2+)</name>
        <dbReference type="ChEBI" id="CHEBI:18420"/>
        <note>catalytic</note>
    </ligand>
</feature>
<feature type="binding site" description="in other chain" evidence="1">
    <location>
        <begin position="126"/>
        <end position="128"/>
    </location>
    <ligand>
        <name>substrate</name>
        <note>ligand shared between dimeric partners</note>
    </ligand>
</feature>
<feature type="binding site" description="in other chain" evidence="1">
    <location>
        <position position="155"/>
    </location>
    <ligand>
        <name>ADP</name>
        <dbReference type="ChEBI" id="CHEBI:456216"/>
        <note>allosteric activator; ligand shared between dimeric partners</note>
    </ligand>
</feature>
<feature type="binding site" evidence="1">
    <location>
        <position position="163"/>
    </location>
    <ligand>
        <name>substrate</name>
        <note>ligand shared between dimeric partners</note>
    </ligand>
</feature>
<feature type="binding site" description="in other chain" evidence="1">
    <location>
        <begin position="170"/>
        <end position="172"/>
    </location>
    <ligand>
        <name>substrate</name>
        <note>ligand shared between dimeric partners</note>
    </ligand>
</feature>
<feature type="binding site" description="in other chain" evidence="1">
    <location>
        <begin position="186"/>
        <end position="188"/>
    </location>
    <ligand>
        <name>ADP</name>
        <dbReference type="ChEBI" id="CHEBI:456216"/>
        <note>allosteric activator; ligand shared between dimeric partners</note>
    </ligand>
</feature>
<feature type="binding site" description="in other chain" evidence="1">
    <location>
        <position position="212"/>
    </location>
    <ligand>
        <name>ADP</name>
        <dbReference type="ChEBI" id="CHEBI:456216"/>
        <note>allosteric activator; ligand shared between dimeric partners</note>
    </ligand>
</feature>
<feature type="binding site" description="in other chain" evidence="1">
    <location>
        <begin position="214"/>
        <end position="216"/>
    </location>
    <ligand>
        <name>ADP</name>
        <dbReference type="ChEBI" id="CHEBI:456216"/>
        <note>allosteric activator; ligand shared between dimeric partners</note>
    </ligand>
</feature>
<feature type="binding site" description="in other chain" evidence="1">
    <location>
        <position position="223"/>
    </location>
    <ligand>
        <name>substrate</name>
        <note>ligand shared between dimeric partners</note>
    </ligand>
</feature>
<feature type="binding site" evidence="1">
    <location>
        <position position="244"/>
    </location>
    <ligand>
        <name>substrate</name>
        <note>ligand shared between dimeric partners</note>
    </ligand>
</feature>
<feature type="binding site" description="in other chain" evidence="1">
    <location>
        <begin position="250"/>
        <end position="253"/>
    </location>
    <ligand>
        <name>substrate</name>
        <note>ligand shared between dimeric partners</note>
    </ligand>
</feature>
<sequence length="320" mass="34840">MIKKIGVLTSGGDAPGMNAAIRGVVRAALTEGLEVMGIYDGYLGLYEDRMVQLDRYSVSDMINRGGTFLGSARFPEFRDENVRAVAIENLKKRGIDALVVIGGDGSYMGAKRLTEMGFPCIGLPGTIDNDIKGTDYTIGYFTALGTVVEAIDRLRDTSSSHQRISIVEVMGRYCGDLTLAAAIAGGCEFVVVPEVEFSRDDLVAEIKAGIAKGKKHAIVAITEHMCDVDELAHYIEKETGRETRATVLGHIQRGGSPVPYDRILASRMGSYAIELLLEGFGGRCVGIQNEQLVHHDIIDAIENMKRPFKGDWLDCAKKLY</sequence>
<accession>A8AL13</accession>
<dbReference type="EC" id="2.7.1.11" evidence="1"/>
<dbReference type="EMBL" id="CP000822">
    <property type="protein sequence ID" value="ABV14176.1"/>
    <property type="molecule type" value="Genomic_DNA"/>
</dbReference>
<dbReference type="RefSeq" id="WP_012133883.1">
    <property type="nucleotide sequence ID" value="NC_009792.1"/>
</dbReference>
<dbReference type="SMR" id="A8AL13"/>
<dbReference type="STRING" id="290338.CKO_03085"/>
<dbReference type="GeneID" id="45136885"/>
<dbReference type="KEGG" id="cko:CKO_03085"/>
<dbReference type="HOGENOM" id="CLU_020655_0_1_6"/>
<dbReference type="OrthoDB" id="9802503at2"/>
<dbReference type="UniPathway" id="UPA00109">
    <property type="reaction ID" value="UER00182"/>
</dbReference>
<dbReference type="Proteomes" id="UP000008148">
    <property type="component" value="Chromosome"/>
</dbReference>
<dbReference type="GO" id="GO:0005945">
    <property type="term" value="C:6-phosphofructokinase complex"/>
    <property type="evidence" value="ECO:0007669"/>
    <property type="project" value="TreeGrafter"/>
</dbReference>
<dbReference type="GO" id="GO:0003872">
    <property type="term" value="F:6-phosphofructokinase activity"/>
    <property type="evidence" value="ECO:0007669"/>
    <property type="project" value="UniProtKB-UniRule"/>
</dbReference>
<dbReference type="GO" id="GO:0016208">
    <property type="term" value="F:AMP binding"/>
    <property type="evidence" value="ECO:0007669"/>
    <property type="project" value="TreeGrafter"/>
</dbReference>
<dbReference type="GO" id="GO:0005524">
    <property type="term" value="F:ATP binding"/>
    <property type="evidence" value="ECO:0007669"/>
    <property type="project" value="UniProtKB-KW"/>
</dbReference>
<dbReference type="GO" id="GO:0070095">
    <property type="term" value="F:fructose-6-phosphate binding"/>
    <property type="evidence" value="ECO:0007669"/>
    <property type="project" value="TreeGrafter"/>
</dbReference>
<dbReference type="GO" id="GO:0042802">
    <property type="term" value="F:identical protein binding"/>
    <property type="evidence" value="ECO:0007669"/>
    <property type="project" value="TreeGrafter"/>
</dbReference>
<dbReference type="GO" id="GO:0046872">
    <property type="term" value="F:metal ion binding"/>
    <property type="evidence" value="ECO:0007669"/>
    <property type="project" value="UniProtKB-KW"/>
</dbReference>
<dbReference type="GO" id="GO:0048029">
    <property type="term" value="F:monosaccharide binding"/>
    <property type="evidence" value="ECO:0007669"/>
    <property type="project" value="TreeGrafter"/>
</dbReference>
<dbReference type="GO" id="GO:0061621">
    <property type="term" value="P:canonical glycolysis"/>
    <property type="evidence" value="ECO:0007669"/>
    <property type="project" value="TreeGrafter"/>
</dbReference>
<dbReference type="GO" id="GO:0030388">
    <property type="term" value="P:fructose 1,6-bisphosphate metabolic process"/>
    <property type="evidence" value="ECO:0007669"/>
    <property type="project" value="TreeGrafter"/>
</dbReference>
<dbReference type="GO" id="GO:0006002">
    <property type="term" value="P:fructose 6-phosphate metabolic process"/>
    <property type="evidence" value="ECO:0007669"/>
    <property type="project" value="InterPro"/>
</dbReference>
<dbReference type="CDD" id="cd00763">
    <property type="entry name" value="Bacterial_PFK"/>
    <property type="match status" value="1"/>
</dbReference>
<dbReference type="FunFam" id="3.40.50.450:FF:000001">
    <property type="entry name" value="ATP-dependent 6-phosphofructokinase"/>
    <property type="match status" value="1"/>
</dbReference>
<dbReference type="FunFam" id="3.40.50.460:FF:000002">
    <property type="entry name" value="ATP-dependent 6-phosphofructokinase"/>
    <property type="match status" value="1"/>
</dbReference>
<dbReference type="Gene3D" id="3.40.50.450">
    <property type="match status" value="1"/>
</dbReference>
<dbReference type="Gene3D" id="3.40.50.460">
    <property type="entry name" value="Phosphofructokinase domain"/>
    <property type="match status" value="1"/>
</dbReference>
<dbReference type="HAMAP" id="MF_00339">
    <property type="entry name" value="Phosphofructokinase_I_B1"/>
    <property type="match status" value="1"/>
</dbReference>
<dbReference type="InterPro" id="IPR022953">
    <property type="entry name" value="ATP_PFK"/>
</dbReference>
<dbReference type="InterPro" id="IPR012003">
    <property type="entry name" value="ATP_PFK_prok-type"/>
</dbReference>
<dbReference type="InterPro" id="IPR012828">
    <property type="entry name" value="PFKA_ATP_prok"/>
</dbReference>
<dbReference type="InterPro" id="IPR015912">
    <property type="entry name" value="Phosphofructokinase_CS"/>
</dbReference>
<dbReference type="InterPro" id="IPR000023">
    <property type="entry name" value="Phosphofructokinase_dom"/>
</dbReference>
<dbReference type="InterPro" id="IPR035966">
    <property type="entry name" value="PKF_sf"/>
</dbReference>
<dbReference type="NCBIfam" id="TIGR02482">
    <property type="entry name" value="PFKA_ATP"/>
    <property type="match status" value="1"/>
</dbReference>
<dbReference type="NCBIfam" id="NF002872">
    <property type="entry name" value="PRK03202.1"/>
    <property type="match status" value="1"/>
</dbReference>
<dbReference type="PANTHER" id="PTHR13697:SF4">
    <property type="entry name" value="ATP-DEPENDENT 6-PHOSPHOFRUCTOKINASE"/>
    <property type="match status" value="1"/>
</dbReference>
<dbReference type="PANTHER" id="PTHR13697">
    <property type="entry name" value="PHOSPHOFRUCTOKINASE"/>
    <property type="match status" value="1"/>
</dbReference>
<dbReference type="Pfam" id="PF00365">
    <property type="entry name" value="PFK"/>
    <property type="match status" value="1"/>
</dbReference>
<dbReference type="PIRSF" id="PIRSF000532">
    <property type="entry name" value="ATP_PFK_prok"/>
    <property type="match status" value="1"/>
</dbReference>
<dbReference type="PRINTS" id="PR00476">
    <property type="entry name" value="PHFRCTKINASE"/>
</dbReference>
<dbReference type="SUPFAM" id="SSF53784">
    <property type="entry name" value="Phosphofructokinase"/>
    <property type="match status" value="1"/>
</dbReference>
<dbReference type="PROSITE" id="PS00433">
    <property type="entry name" value="PHOSPHOFRUCTOKINASE"/>
    <property type="match status" value="1"/>
</dbReference>
<organism>
    <name type="scientific">Citrobacter koseri (strain ATCC BAA-895 / CDC 4225-83 / SGSC4696)</name>
    <dbReference type="NCBI Taxonomy" id="290338"/>
    <lineage>
        <taxon>Bacteria</taxon>
        <taxon>Pseudomonadati</taxon>
        <taxon>Pseudomonadota</taxon>
        <taxon>Gammaproteobacteria</taxon>
        <taxon>Enterobacterales</taxon>
        <taxon>Enterobacteriaceae</taxon>
        <taxon>Citrobacter</taxon>
    </lineage>
</organism>
<evidence type="ECO:0000255" key="1">
    <source>
        <dbReference type="HAMAP-Rule" id="MF_00339"/>
    </source>
</evidence>
<comment type="function">
    <text evidence="1">Catalyzes the phosphorylation of D-fructose 6-phosphate to fructose 1,6-bisphosphate by ATP, the first committing step of glycolysis.</text>
</comment>
<comment type="catalytic activity">
    <reaction evidence="1">
        <text>beta-D-fructose 6-phosphate + ATP = beta-D-fructose 1,6-bisphosphate + ADP + H(+)</text>
        <dbReference type="Rhea" id="RHEA:16109"/>
        <dbReference type="ChEBI" id="CHEBI:15378"/>
        <dbReference type="ChEBI" id="CHEBI:30616"/>
        <dbReference type="ChEBI" id="CHEBI:32966"/>
        <dbReference type="ChEBI" id="CHEBI:57634"/>
        <dbReference type="ChEBI" id="CHEBI:456216"/>
        <dbReference type="EC" id="2.7.1.11"/>
    </reaction>
</comment>
<comment type="cofactor">
    <cofactor evidence="1">
        <name>Mg(2+)</name>
        <dbReference type="ChEBI" id="CHEBI:18420"/>
    </cofactor>
</comment>
<comment type="activity regulation">
    <text evidence="1">Allosterically activated by ADP and other diphosphonucleosides, and allosterically inhibited by phosphoenolpyruvate.</text>
</comment>
<comment type="pathway">
    <text evidence="1">Carbohydrate degradation; glycolysis; D-glyceraldehyde 3-phosphate and glycerone phosphate from D-glucose: step 3/4.</text>
</comment>
<comment type="subunit">
    <text evidence="1">Homotetramer.</text>
</comment>
<comment type="subcellular location">
    <subcellularLocation>
        <location evidence="1">Cytoplasm</location>
    </subcellularLocation>
</comment>
<comment type="similarity">
    <text evidence="1">Belongs to the phosphofructokinase type A (PFKA) family. ATP-dependent PFK group I subfamily. Prokaryotic clade 'B1' sub-subfamily.</text>
</comment>
<gene>
    <name evidence="1" type="primary">pfkA</name>
    <name type="ordered locus">CKO_03085</name>
</gene>